<gene>
    <name evidence="1" type="primary">rlmG</name>
    <name type="ordered locus">VP2353</name>
</gene>
<sequence length="385" mass="43207">MKTELNLHGRSLTLHRFPKRSNETLQAWDAGDEYLINHVEEMALPDHQNIVVINDNFGALACWFSEKHHVTFMSDSFVSHKGAQKNLEDNQCNKVAFLTTMDSIPANTDLVLVQLPKSNRHLVWILSQLRKILPTACPVIAVNKAKEIHTSTLKLFEKYLGETKTSLAWKKHRLVFSQANAEPRIEVDPITAWDVEGEHIQLKNLPNVYSGESLDLGARFMLQHIPQDASINHIIDLGCGNGVLSVKAGQLNPNVRLTCVDESFMALESAKQNLLDNLGEGRDIQCVANNCLDGFKPDSCDLIMCNPPFHQQHAITDHIAWQMFCDAKQILNQNGKLLVIGNRHLGYDAKLKRLFGDKNVKLIASNNKFVILQATKNPAKLSAKQ</sequence>
<comment type="function">
    <text evidence="1">Specifically methylates the guanine in position 1835 (m2G1835) of 23S rRNA.</text>
</comment>
<comment type="catalytic activity">
    <reaction evidence="1">
        <text>guanosine(1835) in 23S rRNA + S-adenosyl-L-methionine = N(2)-methylguanosine(1835) in 23S rRNA + S-adenosyl-L-homocysteine + H(+)</text>
        <dbReference type="Rhea" id="RHEA:42744"/>
        <dbReference type="Rhea" id="RHEA-COMP:10217"/>
        <dbReference type="Rhea" id="RHEA-COMP:10218"/>
        <dbReference type="ChEBI" id="CHEBI:15378"/>
        <dbReference type="ChEBI" id="CHEBI:57856"/>
        <dbReference type="ChEBI" id="CHEBI:59789"/>
        <dbReference type="ChEBI" id="CHEBI:74269"/>
        <dbReference type="ChEBI" id="CHEBI:74481"/>
        <dbReference type="EC" id="2.1.1.174"/>
    </reaction>
</comment>
<comment type="subcellular location">
    <subcellularLocation>
        <location evidence="1">Cytoplasm</location>
    </subcellularLocation>
</comment>
<comment type="similarity">
    <text evidence="1">Belongs to the methyltransferase superfamily. RlmG family.</text>
</comment>
<protein>
    <recommendedName>
        <fullName evidence="1">Ribosomal RNA large subunit methyltransferase G</fullName>
        <ecNumber evidence="1">2.1.1.174</ecNumber>
    </recommendedName>
    <alternativeName>
        <fullName evidence="1">23S rRNA m2G1835 methyltransferase</fullName>
    </alternativeName>
    <alternativeName>
        <fullName evidence="1">rRNA (guanine-N(2)-)-methyltransferase RlmG</fullName>
    </alternativeName>
</protein>
<feature type="chain" id="PRO_0000366535" description="Ribosomal RNA large subunit methyltransferase G">
    <location>
        <begin position="1"/>
        <end position="385"/>
    </location>
</feature>
<accession>Q87MA4</accession>
<name>RLMG_VIBPA</name>
<evidence type="ECO:0000255" key="1">
    <source>
        <dbReference type="HAMAP-Rule" id="MF_01859"/>
    </source>
</evidence>
<dbReference type="EC" id="2.1.1.174" evidence="1"/>
<dbReference type="EMBL" id="BA000031">
    <property type="protein sequence ID" value="BAC60616.1"/>
    <property type="molecule type" value="Genomic_DNA"/>
</dbReference>
<dbReference type="RefSeq" id="NP_798732.1">
    <property type="nucleotide sequence ID" value="NC_004603.1"/>
</dbReference>
<dbReference type="RefSeq" id="WP_005456632.1">
    <property type="nucleotide sequence ID" value="NC_004603.1"/>
</dbReference>
<dbReference type="SMR" id="Q87MA4"/>
<dbReference type="GeneID" id="1189866"/>
<dbReference type="KEGG" id="vpa:VP2353"/>
<dbReference type="PATRIC" id="fig|223926.6.peg.2256"/>
<dbReference type="eggNOG" id="COG2813">
    <property type="taxonomic scope" value="Bacteria"/>
</dbReference>
<dbReference type="HOGENOM" id="CLU_040288_4_0_6"/>
<dbReference type="Proteomes" id="UP000002493">
    <property type="component" value="Chromosome 1"/>
</dbReference>
<dbReference type="GO" id="GO:0005737">
    <property type="term" value="C:cytoplasm"/>
    <property type="evidence" value="ECO:0007669"/>
    <property type="project" value="UniProtKB-SubCell"/>
</dbReference>
<dbReference type="GO" id="GO:0052916">
    <property type="term" value="F:23S rRNA (guanine(1835)-N(2))-methyltransferase activity"/>
    <property type="evidence" value="ECO:0007669"/>
    <property type="project" value="UniProtKB-EC"/>
</dbReference>
<dbReference type="CDD" id="cd02440">
    <property type="entry name" value="AdoMet_MTases"/>
    <property type="match status" value="1"/>
</dbReference>
<dbReference type="Gene3D" id="3.40.50.150">
    <property type="entry name" value="Vaccinia Virus protein VP39"/>
    <property type="match status" value="2"/>
</dbReference>
<dbReference type="HAMAP" id="MF_01859">
    <property type="entry name" value="23SrRNA_methyltr_G"/>
    <property type="match status" value="1"/>
</dbReference>
<dbReference type="InterPro" id="IPR017237">
    <property type="entry name" value="rRNA_m2G-MeTrfase_RlmG"/>
</dbReference>
<dbReference type="InterPro" id="IPR046977">
    <property type="entry name" value="RsmC/RlmG"/>
</dbReference>
<dbReference type="InterPro" id="IPR029063">
    <property type="entry name" value="SAM-dependent_MTases_sf"/>
</dbReference>
<dbReference type="InterPro" id="IPR007848">
    <property type="entry name" value="Small_mtfrase_dom"/>
</dbReference>
<dbReference type="PANTHER" id="PTHR47816:SF5">
    <property type="entry name" value="RIBOSOMAL RNA LARGE SUBUNIT METHYLTRANSFERASE G"/>
    <property type="match status" value="1"/>
</dbReference>
<dbReference type="PANTHER" id="PTHR47816">
    <property type="entry name" value="RIBOSOMAL RNA SMALL SUBUNIT METHYLTRANSFERASE C"/>
    <property type="match status" value="1"/>
</dbReference>
<dbReference type="Pfam" id="PF05175">
    <property type="entry name" value="MTS"/>
    <property type="match status" value="1"/>
</dbReference>
<dbReference type="PIRSF" id="PIRSF037565">
    <property type="entry name" value="RRNA_m2G_Mtase_RsmD_prd"/>
    <property type="match status" value="1"/>
</dbReference>
<dbReference type="SUPFAM" id="SSF53335">
    <property type="entry name" value="S-adenosyl-L-methionine-dependent methyltransferases"/>
    <property type="match status" value="1"/>
</dbReference>
<proteinExistence type="inferred from homology"/>
<organism>
    <name type="scientific">Vibrio parahaemolyticus serotype O3:K6 (strain RIMD 2210633)</name>
    <dbReference type="NCBI Taxonomy" id="223926"/>
    <lineage>
        <taxon>Bacteria</taxon>
        <taxon>Pseudomonadati</taxon>
        <taxon>Pseudomonadota</taxon>
        <taxon>Gammaproteobacteria</taxon>
        <taxon>Vibrionales</taxon>
        <taxon>Vibrionaceae</taxon>
        <taxon>Vibrio</taxon>
    </lineage>
</organism>
<keyword id="KW-0963">Cytoplasm</keyword>
<keyword id="KW-0489">Methyltransferase</keyword>
<keyword id="KW-0698">rRNA processing</keyword>
<keyword id="KW-0949">S-adenosyl-L-methionine</keyword>
<keyword id="KW-0808">Transferase</keyword>
<reference key="1">
    <citation type="journal article" date="2003" name="Lancet">
        <title>Genome sequence of Vibrio parahaemolyticus: a pathogenic mechanism distinct from that of V. cholerae.</title>
        <authorList>
            <person name="Makino K."/>
            <person name="Oshima K."/>
            <person name="Kurokawa K."/>
            <person name="Yokoyama K."/>
            <person name="Uda T."/>
            <person name="Tagomori K."/>
            <person name="Iijima Y."/>
            <person name="Najima M."/>
            <person name="Nakano M."/>
            <person name="Yamashita A."/>
            <person name="Kubota Y."/>
            <person name="Kimura S."/>
            <person name="Yasunaga T."/>
            <person name="Honda T."/>
            <person name="Shinagawa H."/>
            <person name="Hattori M."/>
            <person name="Iida T."/>
        </authorList>
    </citation>
    <scope>NUCLEOTIDE SEQUENCE [LARGE SCALE GENOMIC DNA]</scope>
    <source>
        <strain>RIMD 2210633</strain>
    </source>
</reference>